<dbReference type="EMBL" id="AE017220">
    <property type="protein sequence ID" value="AAX68303.1"/>
    <property type="molecule type" value="Genomic_DNA"/>
</dbReference>
<dbReference type="RefSeq" id="WP_000511329.1">
    <property type="nucleotide sequence ID" value="NC_006905.1"/>
</dbReference>
<dbReference type="KEGG" id="sec:SCH_4397"/>
<dbReference type="HOGENOM" id="CLU_117642_1_0_6"/>
<dbReference type="Proteomes" id="UP000000538">
    <property type="component" value="Chromosome"/>
</dbReference>
<dbReference type="GO" id="GO:0005886">
    <property type="term" value="C:plasma membrane"/>
    <property type="evidence" value="ECO:0007669"/>
    <property type="project" value="UniProtKB-SubCell"/>
</dbReference>
<dbReference type="GO" id="GO:0015744">
    <property type="term" value="P:succinate transport"/>
    <property type="evidence" value="ECO:0007669"/>
    <property type="project" value="UniProtKB-UniRule"/>
</dbReference>
<dbReference type="HAMAP" id="MF_01191">
    <property type="entry name" value="YjjB"/>
    <property type="match status" value="1"/>
</dbReference>
<dbReference type="InterPro" id="IPR024528">
    <property type="entry name" value="ThrE_2"/>
</dbReference>
<dbReference type="InterPro" id="IPR050539">
    <property type="entry name" value="ThrE_Dicarb/AminoAcid_Exp"/>
</dbReference>
<dbReference type="InterPro" id="IPR020914">
    <property type="entry name" value="YjjB"/>
</dbReference>
<dbReference type="NCBIfam" id="NF007391">
    <property type="entry name" value="PRK09917.1"/>
    <property type="match status" value="1"/>
</dbReference>
<dbReference type="PANTHER" id="PTHR34390:SF1">
    <property type="entry name" value="SUCCINATE TRANSPORTER SUBUNIT YJJB-RELATED"/>
    <property type="match status" value="1"/>
</dbReference>
<dbReference type="PANTHER" id="PTHR34390">
    <property type="entry name" value="UPF0442 PROTEIN YJJB-RELATED"/>
    <property type="match status" value="1"/>
</dbReference>
<dbReference type="Pfam" id="PF12821">
    <property type="entry name" value="ThrE_2"/>
    <property type="match status" value="1"/>
</dbReference>
<feature type="chain" id="PRO_0000293672" description="Probable succinate transporter subunit YjjB">
    <location>
        <begin position="1"/>
        <end position="157"/>
    </location>
</feature>
<feature type="transmembrane region" description="Helical" evidence="1">
    <location>
        <begin position="8"/>
        <end position="28"/>
    </location>
</feature>
<feature type="transmembrane region" description="Helical" evidence="1">
    <location>
        <begin position="55"/>
        <end position="75"/>
    </location>
</feature>
<feature type="transmembrane region" description="Helical" evidence="1">
    <location>
        <begin position="87"/>
        <end position="107"/>
    </location>
</feature>
<feature type="transmembrane region" description="Helical" evidence="1">
    <location>
        <begin position="129"/>
        <end position="149"/>
    </location>
</feature>
<proteinExistence type="inferred from homology"/>
<protein>
    <recommendedName>
        <fullName evidence="1">Probable succinate transporter subunit YjjB</fullName>
    </recommendedName>
</protein>
<comment type="function">
    <text evidence="1">Involved in succinate export with YjjP. Both proteins are required for export.</text>
</comment>
<comment type="subunit">
    <text evidence="1">The transporter is composed of YjjB and YjjP.</text>
</comment>
<comment type="subcellular location">
    <subcellularLocation>
        <location evidence="1">Cell inner membrane</location>
        <topology evidence="1">Multi-pass membrane protein</topology>
    </subcellularLocation>
</comment>
<comment type="similarity">
    <text evidence="1">Belongs to the ThrE exporter (TC 2.A.79) family.</text>
</comment>
<organism>
    <name type="scientific">Salmonella choleraesuis (strain SC-B67)</name>
    <dbReference type="NCBI Taxonomy" id="321314"/>
    <lineage>
        <taxon>Bacteria</taxon>
        <taxon>Pseudomonadati</taxon>
        <taxon>Pseudomonadota</taxon>
        <taxon>Gammaproteobacteria</taxon>
        <taxon>Enterobacterales</taxon>
        <taxon>Enterobacteriaceae</taxon>
        <taxon>Salmonella</taxon>
    </lineage>
</organism>
<reference key="1">
    <citation type="journal article" date="2005" name="Nucleic Acids Res.">
        <title>The genome sequence of Salmonella enterica serovar Choleraesuis, a highly invasive and resistant zoonotic pathogen.</title>
        <authorList>
            <person name="Chiu C.-H."/>
            <person name="Tang P."/>
            <person name="Chu C."/>
            <person name="Hu S."/>
            <person name="Bao Q."/>
            <person name="Yu J."/>
            <person name="Chou Y.-Y."/>
            <person name="Wang H.-S."/>
            <person name="Lee Y.-S."/>
        </authorList>
    </citation>
    <scope>NUCLEOTIDE SEQUENCE [LARGE SCALE GENOMIC DNA]</scope>
    <source>
        <strain>SC-B67</strain>
    </source>
</reference>
<evidence type="ECO:0000255" key="1">
    <source>
        <dbReference type="HAMAP-Rule" id="MF_01191"/>
    </source>
</evidence>
<name>YJJB_SALCH</name>
<gene>
    <name evidence="1" type="primary">yjjB</name>
    <name type="ordered locus">SCH_4397</name>
</gene>
<accession>Q57G59</accession>
<sequence length="157" mass="17116">MGIIDFLLALMQDMILSAIPAVGFAMVFNVPHRALPWCALLGALGHGSRMLMMSAGFNIEWSTFMASLLVGSIGIQWSRWYLAHPKVFTVAAVIPMFPGISAYTAMISAVKISHLGYSEPMMITLLTNFLKASSIVGALSIGLSVPGLWLYRKRPRV</sequence>
<keyword id="KW-0997">Cell inner membrane</keyword>
<keyword id="KW-1003">Cell membrane</keyword>
<keyword id="KW-0472">Membrane</keyword>
<keyword id="KW-0812">Transmembrane</keyword>
<keyword id="KW-1133">Transmembrane helix</keyword>
<keyword id="KW-0813">Transport</keyword>